<name>SUCC_DICNV</name>
<dbReference type="EC" id="6.2.1.5" evidence="1"/>
<dbReference type="EMBL" id="CP000513">
    <property type="protein sequence ID" value="ABQ13423.1"/>
    <property type="molecule type" value="Genomic_DNA"/>
</dbReference>
<dbReference type="RefSeq" id="WP_012031596.1">
    <property type="nucleotide sequence ID" value="NC_009446.1"/>
</dbReference>
<dbReference type="SMR" id="A5EX54"/>
<dbReference type="STRING" id="246195.DNO_1312"/>
<dbReference type="KEGG" id="dno:DNO_1312"/>
<dbReference type="eggNOG" id="COG0045">
    <property type="taxonomic scope" value="Bacteria"/>
</dbReference>
<dbReference type="HOGENOM" id="CLU_037430_0_2_6"/>
<dbReference type="OrthoDB" id="9802602at2"/>
<dbReference type="UniPathway" id="UPA00223">
    <property type="reaction ID" value="UER00999"/>
</dbReference>
<dbReference type="Proteomes" id="UP000000248">
    <property type="component" value="Chromosome"/>
</dbReference>
<dbReference type="GO" id="GO:0005829">
    <property type="term" value="C:cytosol"/>
    <property type="evidence" value="ECO:0007669"/>
    <property type="project" value="TreeGrafter"/>
</dbReference>
<dbReference type="GO" id="GO:0042709">
    <property type="term" value="C:succinate-CoA ligase complex"/>
    <property type="evidence" value="ECO:0007669"/>
    <property type="project" value="TreeGrafter"/>
</dbReference>
<dbReference type="GO" id="GO:0005524">
    <property type="term" value="F:ATP binding"/>
    <property type="evidence" value="ECO:0007669"/>
    <property type="project" value="UniProtKB-UniRule"/>
</dbReference>
<dbReference type="GO" id="GO:0000287">
    <property type="term" value="F:magnesium ion binding"/>
    <property type="evidence" value="ECO:0007669"/>
    <property type="project" value="UniProtKB-UniRule"/>
</dbReference>
<dbReference type="GO" id="GO:0004775">
    <property type="term" value="F:succinate-CoA ligase (ADP-forming) activity"/>
    <property type="evidence" value="ECO:0007669"/>
    <property type="project" value="UniProtKB-UniRule"/>
</dbReference>
<dbReference type="GO" id="GO:0004776">
    <property type="term" value="F:succinate-CoA ligase (GDP-forming) activity"/>
    <property type="evidence" value="ECO:0007669"/>
    <property type="project" value="RHEA"/>
</dbReference>
<dbReference type="GO" id="GO:0006104">
    <property type="term" value="P:succinyl-CoA metabolic process"/>
    <property type="evidence" value="ECO:0007669"/>
    <property type="project" value="TreeGrafter"/>
</dbReference>
<dbReference type="GO" id="GO:0006099">
    <property type="term" value="P:tricarboxylic acid cycle"/>
    <property type="evidence" value="ECO:0007669"/>
    <property type="project" value="UniProtKB-UniRule"/>
</dbReference>
<dbReference type="FunFam" id="3.30.1490.20:FF:000002">
    <property type="entry name" value="Succinate--CoA ligase [ADP-forming] subunit beta"/>
    <property type="match status" value="1"/>
</dbReference>
<dbReference type="FunFam" id="3.30.470.20:FF:000002">
    <property type="entry name" value="Succinate--CoA ligase [ADP-forming] subunit beta"/>
    <property type="match status" value="1"/>
</dbReference>
<dbReference type="FunFam" id="3.40.50.261:FF:000001">
    <property type="entry name" value="Succinate--CoA ligase [ADP-forming] subunit beta"/>
    <property type="match status" value="1"/>
</dbReference>
<dbReference type="Gene3D" id="3.30.1490.20">
    <property type="entry name" value="ATP-grasp fold, A domain"/>
    <property type="match status" value="1"/>
</dbReference>
<dbReference type="Gene3D" id="3.30.470.20">
    <property type="entry name" value="ATP-grasp fold, B domain"/>
    <property type="match status" value="1"/>
</dbReference>
<dbReference type="Gene3D" id="3.40.50.261">
    <property type="entry name" value="Succinyl-CoA synthetase domains"/>
    <property type="match status" value="1"/>
</dbReference>
<dbReference type="HAMAP" id="MF_00558">
    <property type="entry name" value="Succ_CoA_beta"/>
    <property type="match status" value="1"/>
</dbReference>
<dbReference type="InterPro" id="IPR011761">
    <property type="entry name" value="ATP-grasp"/>
</dbReference>
<dbReference type="InterPro" id="IPR013650">
    <property type="entry name" value="ATP-grasp_succ-CoA_synth-type"/>
</dbReference>
<dbReference type="InterPro" id="IPR013815">
    <property type="entry name" value="ATP_grasp_subdomain_1"/>
</dbReference>
<dbReference type="InterPro" id="IPR017866">
    <property type="entry name" value="Succ-CoA_synthase_bsu_CS"/>
</dbReference>
<dbReference type="InterPro" id="IPR005811">
    <property type="entry name" value="SUCC_ACL_C"/>
</dbReference>
<dbReference type="InterPro" id="IPR005809">
    <property type="entry name" value="Succ_CoA_ligase-like_bsu"/>
</dbReference>
<dbReference type="InterPro" id="IPR016102">
    <property type="entry name" value="Succinyl-CoA_synth-like"/>
</dbReference>
<dbReference type="NCBIfam" id="NF001913">
    <property type="entry name" value="PRK00696.1"/>
    <property type="match status" value="1"/>
</dbReference>
<dbReference type="NCBIfam" id="TIGR01016">
    <property type="entry name" value="sucCoAbeta"/>
    <property type="match status" value="1"/>
</dbReference>
<dbReference type="PANTHER" id="PTHR11815:SF10">
    <property type="entry name" value="SUCCINATE--COA LIGASE [GDP-FORMING] SUBUNIT BETA, MITOCHONDRIAL"/>
    <property type="match status" value="1"/>
</dbReference>
<dbReference type="PANTHER" id="PTHR11815">
    <property type="entry name" value="SUCCINYL-COA SYNTHETASE BETA CHAIN"/>
    <property type="match status" value="1"/>
</dbReference>
<dbReference type="Pfam" id="PF08442">
    <property type="entry name" value="ATP-grasp_2"/>
    <property type="match status" value="1"/>
</dbReference>
<dbReference type="Pfam" id="PF00549">
    <property type="entry name" value="Ligase_CoA"/>
    <property type="match status" value="1"/>
</dbReference>
<dbReference type="PIRSF" id="PIRSF001554">
    <property type="entry name" value="SucCS_beta"/>
    <property type="match status" value="1"/>
</dbReference>
<dbReference type="SUPFAM" id="SSF56059">
    <property type="entry name" value="Glutathione synthetase ATP-binding domain-like"/>
    <property type="match status" value="1"/>
</dbReference>
<dbReference type="SUPFAM" id="SSF52210">
    <property type="entry name" value="Succinyl-CoA synthetase domains"/>
    <property type="match status" value="1"/>
</dbReference>
<dbReference type="PROSITE" id="PS50975">
    <property type="entry name" value="ATP_GRASP"/>
    <property type="match status" value="1"/>
</dbReference>
<dbReference type="PROSITE" id="PS01217">
    <property type="entry name" value="SUCCINYL_COA_LIG_3"/>
    <property type="match status" value="1"/>
</dbReference>
<proteinExistence type="inferred from homology"/>
<feature type="chain" id="PRO_1000082072" description="Succinate--CoA ligase [ADP-forming] subunit beta">
    <location>
        <begin position="1"/>
        <end position="386"/>
    </location>
</feature>
<feature type="domain" description="ATP-grasp" evidence="1">
    <location>
        <begin position="9"/>
        <end position="244"/>
    </location>
</feature>
<feature type="binding site" evidence="1">
    <location>
        <position position="46"/>
    </location>
    <ligand>
        <name>ATP</name>
        <dbReference type="ChEBI" id="CHEBI:30616"/>
    </ligand>
</feature>
<feature type="binding site" evidence="1">
    <location>
        <begin position="53"/>
        <end position="55"/>
    </location>
    <ligand>
        <name>ATP</name>
        <dbReference type="ChEBI" id="CHEBI:30616"/>
    </ligand>
</feature>
<feature type="binding site" evidence="1">
    <location>
        <position position="100"/>
    </location>
    <ligand>
        <name>ATP</name>
        <dbReference type="ChEBI" id="CHEBI:30616"/>
    </ligand>
</feature>
<feature type="binding site" evidence="1">
    <location>
        <position position="103"/>
    </location>
    <ligand>
        <name>ATP</name>
        <dbReference type="ChEBI" id="CHEBI:30616"/>
    </ligand>
</feature>
<feature type="binding site" evidence="1">
    <location>
        <position position="199"/>
    </location>
    <ligand>
        <name>Mg(2+)</name>
        <dbReference type="ChEBI" id="CHEBI:18420"/>
    </ligand>
</feature>
<feature type="binding site" evidence="1">
    <location>
        <position position="213"/>
    </location>
    <ligand>
        <name>Mg(2+)</name>
        <dbReference type="ChEBI" id="CHEBI:18420"/>
    </ligand>
</feature>
<feature type="binding site" evidence="1">
    <location>
        <position position="264"/>
    </location>
    <ligand>
        <name>substrate</name>
        <note>ligand shared with subunit alpha</note>
    </ligand>
</feature>
<feature type="binding site" evidence="1">
    <location>
        <begin position="321"/>
        <end position="323"/>
    </location>
    <ligand>
        <name>substrate</name>
        <note>ligand shared with subunit alpha</note>
    </ligand>
</feature>
<keyword id="KW-0067">ATP-binding</keyword>
<keyword id="KW-0436">Ligase</keyword>
<keyword id="KW-0460">Magnesium</keyword>
<keyword id="KW-0479">Metal-binding</keyword>
<keyword id="KW-0547">Nucleotide-binding</keyword>
<keyword id="KW-1185">Reference proteome</keyword>
<keyword id="KW-0816">Tricarboxylic acid cycle</keyword>
<reference key="1">
    <citation type="journal article" date="2007" name="Nat. Biotechnol.">
        <title>Genome sequence and identification of candidate vaccine antigens from the animal pathogen Dichelobacter nodosus.</title>
        <authorList>
            <person name="Myers G.S.A."/>
            <person name="Parker D."/>
            <person name="Al-Hasani K."/>
            <person name="Kennan R.M."/>
            <person name="Seemann T."/>
            <person name="Ren Q."/>
            <person name="Badger J.H."/>
            <person name="Selengut J.D."/>
            <person name="Deboy R.T."/>
            <person name="Tettelin H."/>
            <person name="Boyce J.D."/>
            <person name="McCarl V.P."/>
            <person name="Han X."/>
            <person name="Nelson W.C."/>
            <person name="Madupu R."/>
            <person name="Mohamoud Y."/>
            <person name="Holley T."/>
            <person name="Fedorova N."/>
            <person name="Khouri H."/>
            <person name="Bottomley S.P."/>
            <person name="Whittington R.J."/>
            <person name="Adler B."/>
            <person name="Songer J.G."/>
            <person name="Rood J.I."/>
            <person name="Paulsen I.T."/>
        </authorList>
    </citation>
    <scope>NUCLEOTIDE SEQUENCE [LARGE SCALE GENOMIC DNA]</scope>
    <source>
        <strain>VCS1703A</strain>
    </source>
</reference>
<accession>A5EX54</accession>
<gene>
    <name evidence="1" type="primary">sucC</name>
    <name type="ordered locus">DNO_1312</name>
</gene>
<protein>
    <recommendedName>
        <fullName evidence="1">Succinate--CoA ligase [ADP-forming] subunit beta</fullName>
        <ecNumber evidence="1">6.2.1.5</ecNumber>
    </recommendedName>
    <alternativeName>
        <fullName evidence="1">Succinyl-CoA synthetase subunit beta</fullName>
        <shortName evidence="1">SCS-beta</shortName>
    </alternativeName>
</protein>
<comment type="function">
    <text evidence="1">Succinyl-CoA synthetase functions in the citric acid cycle (TCA), coupling the hydrolysis of succinyl-CoA to the synthesis of either ATP or GTP and thus represents the only step of substrate-level phosphorylation in the TCA. The beta subunit provides nucleotide specificity of the enzyme and binds the substrate succinate, while the binding sites for coenzyme A and phosphate are found in the alpha subunit.</text>
</comment>
<comment type="catalytic activity">
    <reaction evidence="1">
        <text>succinate + ATP + CoA = succinyl-CoA + ADP + phosphate</text>
        <dbReference type="Rhea" id="RHEA:17661"/>
        <dbReference type="ChEBI" id="CHEBI:30031"/>
        <dbReference type="ChEBI" id="CHEBI:30616"/>
        <dbReference type="ChEBI" id="CHEBI:43474"/>
        <dbReference type="ChEBI" id="CHEBI:57287"/>
        <dbReference type="ChEBI" id="CHEBI:57292"/>
        <dbReference type="ChEBI" id="CHEBI:456216"/>
        <dbReference type="EC" id="6.2.1.5"/>
    </reaction>
    <physiologicalReaction direction="right-to-left" evidence="1">
        <dbReference type="Rhea" id="RHEA:17663"/>
    </physiologicalReaction>
</comment>
<comment type="catalytic activity">
    <reaction evidence="1">
        <text>GTP + succinate + CoA = succinyl-CoA + GDP + phosphate</text>
        <dbReference type="Rhea" id="RHEA:22120"/>
        <dbReference type="ChEBI" id="CHEBI:30031"/>
        <dbReference type="ChEBI" id="CHEBI:37565"/>
        <dbReference type="ChEBI" id="CHEBI:43474"/>
        <dbReference type="ChEBI" id="CHEBI:57287"/>
        <dbReference type="ChEBI" id="CHEBI:57292"/>
        <dbReference type="ChEBI" id="CHEBI:58189"/>
    </reaction>
    <physiologicalReaction direction="right-to-left" evidence="1">
        <dbReference type="Rhea" id="RHEA:22122"/>
    </physiologicalReaction>
</comment>
<comment type="cofactor">
    <cofactor evidence="1">
        <name>Mg(2+)</name>
        <dbReference type="ChEBI" id="CHEBI:18420"/>
    </cofactor>
    <text evidence="1">Binds 1 Mg(2+) ion per subunit.</text>
</comment>
<comment type="pathway">
    <text evidence="1">Carbohydrate metabolism; tricarboxylic acid cycle; succinate from succinyl-CoA (ligase route): step 1/1.</text>
</comment>
<comment type="subunit">
    <text evidence="1">Heterotetramer of two alpha and two beta subunits.</text>
</comment>
<comment type="similarity">
    <text evidence="1">Belongs to the succinate/malate CoA ligase beta subunit family.</text>
</comment>
<sequence length="386" mass="41925">MNLHEYQAKALLRAAGIKTPRGIIIKNSVEAKEAAQQLGGNRWVVKAQIHSGGRGKAGGIKTAQTLDEVHHISAAMLGSRLKTEQSSADGLPINEVLIEEECRAIATYYLALTLDRPRQQIVFIASMAGGTEIETVAETNPEAIIYAGVNPAIGFSPYLSARVGGALQLDKSYQLPLTKLMNRLYQLFIDNDLTLLELNPLIITEDHEFLPLDAKISIDDNALFRHQELVDLRDTTQEDHRETQAQELQLNYVPLDGTIGCIANGAGLAMATMDIIKLYGGEPANFLDVGGDATSERVKQAFKLILTSSRIKSILVNIFGGIVRCDLIADGIIQAAKEIDLKIPVIVRLQGNNVDLGRKMLDECPLNLQAADDLIDAAQKAIAAAQ</sequence>
<evidence type="ECO:0000255" key="1">
    <source>
        <dbReference type="HAMAP-Rule" id="MF_00558"/>
    </source>
</evidence>
<organism>
    <name type="scientific">Dichelobacter nodosus (strain VCS1703A)</name>
    <dbReference type="NCBI Taxonomy" id="246195"/>
    <lineage>
        <taxon>Bacteria</taxon>
        <taxon>Pseudomonadati</taxon>
        <taxon>Pseudomonadota</taxon>
        <taxon>Gammaproteobacteria</taxon>
        <taxon>Cardiobacteriales</taxon>
        <taxon>Cardiobacteriaceae</taxon>
        <taxon>Dichelobacter</taxon>
    </lineage>
</organism>